<comment type="catalytic activity">
    <reaction evidence="1">
        <text>L-glutamate 5-semialdehyde + NAD(+) + H2O = L-glutamate + NADH + 2 H(+)</text>
        <dbReference type="Rhea" id="RHEA:30235"/>
        <dbReference type="ChEBI" id="CHEBI:15377"/>
        <dbReference type="ChEBI" id="CHEBI:15378"/>
        <dbReference type="ChEBI" id="CHEBI:29985"/>
        <dbReference type="ChEBI" id="CHEBI:57540"/>
        <dbReference type="ChEBI" id="CHEBI:57945"/>
        <dbReference type="ChEBI" id="CHEBI:58066"/>
        <dbReference type="EC" id="1.2.1.88"/>
    </reaction>
</comment>
<comment type="pathway">
    <text evidence="1">Amino-acid degradation; L-proline degradation into L-glutamate; L-glutamate from L-proline: step 2/2.</text>
</comment>
<comment type="similarity">
    <text evidence="1">Belongs to the aldehyde dehydrogenase family. RocA subfamily.</text>
</comment>
<evidence type="ECO:0000255" key="1">
    <source>
        <dbReference type="HAMAP-Rule" id="MF_00733"/>
    </source>
</evidence>
<keyword id="KW-0520">NAD</keyword>
<keyword id="KW-0560">Oxidoreductase</keyword>
<sequence length="515" mass="56225">MVVAYKHEPFTDFSVEANKLAFEEGLKKVESYLGQDYPLIIGGEKITTEDKIVSVNPANKEELVGRVSKASRELAEKAMQVADETFQTWRKSKPEMRADILFRAAAIVRRRKHEFSAILVKEAGKPWNEADADTAEAIDFMEYYGRQMLKLKDGIPVESRPIEYNRFSYIPLGVGVIISPWNFPFAIMAGMTTAALVSGNTVLLKPASTTPVVAAKFMEVLEEAGLPAGVVNFVPGNGSEVGDYLVDHPRTRFISFTGSRDVGIRIYERAAKVNPGQIWLKRVIAEMGGKDTIVVDKEADLELAAKSIVASAFGFSGQKCSACSRAVIHEDVYDHVLNRAVELTKELTVANPAVLGTNMGPVNDQAAFDKVMSYVAIGKEEGRILAGGEGDDSKGWFIQPTIVADVAEDARLMKEEIFGPVVAFCKAKDFDHALAIANNTEYGLTGAVISNNRDHIEKAREDFHVGNLYFNRGCTGAIVGYQPFGGFNMSGTDSKAGGPDYLALHMQAKTTSETL</sequence>
<protein>
    <recommendedName>
        <fullName evidence="1">1-pyrroline-5-carboxylate dehydrogenase</fullName>
        <shortName evidence="1">P5C dehydrogenase</shortName>
        <ecNumber evidence="1">1.2.1.88</ecNumber>
    </recommendedName>
    <alternativeName>
        <fullName evidence="1">L-glutamate gamma-semialdehyde dehydrogenase</fullName>
    </alternativeName>
</protein>
<gene>
    <name evidence="1" type="primary">rocA</name>
    <name type="ordered locus">BAA_0363</name>
</gene>
<accession>C3PBP4</accession>
<proteinExistence type="inferred from homology"/>
<name>ROCA_BACAA</name>
<reference key="1">
    <citation type="submission" date="2009-04" db="EMBL/GenBank/DDBJ databases">
        <title>Genome sequence of Bacillus anthracis A0248.</title>
        <authorList>
            <person name="Dodson R.J."/>
            <person name="Munk A.C."/>
            <person name="Bruce D."/>
            <person name="Detter C."/>
            <person name="Tapia R."/>
            <person name="Sutton G."/>
            <person name="Sims D."/>
            <person name="Brettin T."/>
        </authorList>
    </citation>
    <scope>NUCLEOTIDE SEQUENCE [LARGE SCALE GENOMIC DNA]</scope>
    <source>
        <strain>A0248</strain>
    </source>
</reference>
<feature type="chain" id="PRO_1000148095" description="1-pyrroline-5-carboxylate dehydrogenase">
    <location>
        <begin position="1"/>
        <end position="515"/>
    </location>
</feature>
<feature type="active site" evidence="1">
    <location>
        <position position="286"/>
    </location>
</feature>
<feature type="active site" evidence="1">
    <location>
        <position position="320"/>
    </location>
</feature>
<organism>
    <name type="scientific">Bacillus anthracis (strain A0248)</name>
    <dbReference type="NCBI Taxonomy" id="592021"/>
    <lineage>
        <taxon>Bacteria</taxon>
        <taxon>Bacillati</taxon>
        <taxon>Bacillota</taxon>
        <taxon>Bacilli</taxon>
        <taxon>Bacillales</taxon>
        <taxon>Bacillaceae</taxon>
        <taxon>Bacillus</taxon>
        <taxon>Bacillus cereus group</taxon>
    </lineage>
</organism>
<dbReference type="EC" id="1.2.1.88" evidence="1"/>
<dbReference type="EMBL" id="CP001598">
    <property type="protein sequence ID" value="ACQ48277.1"/>
    <property type="molecule type" value="Genomic_DNA"/>
</dbReference>
<dbReference type="SMR" id="C3PBP4"/>
<dbReference type="KEGG" id="bai:BAA_0363"/>
<dbReference type="HOGENOM" id="CLU_005391_0_0_9"/>
<dbReference type="UniPathway" id="UPA00261">
    <property type="reaction ID" value="UER00374"/>
</dbReference>
<dbReference type="GO" id="GO:0009898">
    <property type="term" value="C:cytoplasmic side of plasma membrane"/>
    <property type="evidence" value="ECO:0007669"/>
    <property type="project" value="TreeGrafter"/>
</dbReference>
<dbReference type="GO" id="GO:0003842">
    <property type="term" value="F:1-pyrroline-5-carboxylate dehydrogenase activity"/>
    <property type="evidence" value="ECO:0007669"/>
    <property type="project" value="UniProtKB-UniRule"/>
</dbReference>
<dbReference type="GO" id="GO:0006537">
    <property type="term" value="P:glutamate biosynthetic process"/>
    <property type="evidence" value="ECO:0007669"/>
    <property type="project" value="UniProtKB-UniRule"/>
</dbReference>
<dbReference type="GO" id="GO:0010133">
    <property type="term" value="P:proline catabolic process to glutamate"/>
    <property type="evidence" value="ECO:0007669"/>
    <property type="project" value="UniProtKB-UniPathway"/>
</dbReference>
<dbReference type="CDD" id="cd07124">
    <property type="entry name" value="ALDH_PutA-P5CDH-RocA"/>
    <property type="match status" value="1"/>
</dbReference>
<dbReference type="FunFam" id="3.40.309.10:FF:000005">
    <property type="entry name" value="1-pyrroline-5-carboxylate dehydrogenase 1"/>
    <property type="match status" value="1"/>
</dbReference>
<dbReference type="FunFam" id="3.40.605.10:FF:000045">
    <property type="entry name" value="1-pyrroline-5-carboxylate dehydrogenase 1"/>
    <property type="match status" value="1"/>
</dbReference>
<dbReference type="Gene3D" id="3.40.605.10">
    <property type="entry name" value="Aldehyde Dehydrogenase, Chain A, domain 1"/>
    <property type="match status" value="1"/>
</dbReference>
<dbReference type="Gene3D" id="3.40.309.10">
    <property type="entry name" value="Aldehyde Dehydrogenase, Chain A, domain 2"/>
    <property type="match status" value="1"/>
</dbReference>
<dbReference type="HAMAP" id="MF_00733">
    <property type="entry name" value="RocA"/>
    <property type="match status" value="1"/>
</dbReference>
<dbReference type="InterPro" id="IPR016161">
    <property type="entry name" value="Ald_DH/histidinol_DH"/>
</dbReference>
<dbReference type="InterPro" id="IPR016163">
    <property type="entry name" value="Ald_DH_C"/>
</dbReference>
<dbReference type="InterPro" id="IPR016160">
    <property type="entry name" value="Ald_DH_CS_CYS"/>
</dbReference>
<dbReference type="InterPro" id="IPR029510">
    <property type="entry name" value="Ald_DH_CS_GLU"/>
</dbReference>
<dbReference type="InterPro" id="IPR016162">
    <property type="entry name" value="Ald_DH_N"/>
</dbReference>
<dbReference type="InterPro" id="IPR015590">
    <property type="entry name" value="Aldehyde_DH_dom"/>
</dbReference>
<dbReference type="InterPro" id="IPR050485">
    <property type="entry name" value="Proline_metab_enzyme"/>
</dbReference>
<dbReference type="InterPro" id="IPR005932">
    <property type="entry name" value="RocA"/>
</dbReference>
<dbReference type="InterPro" id="IPR047597">
    <property type="entry name" value="RocA_bacillales"/>
</dbReference>
<dbReference type="NCBIfam" id="TIGR01237">
    <property type="entry name" value="D1pyr5carbox2"/>
    <property type="match status" value="1"/>
</dbReference>
<dbReference type="NCBIfam" id="NF002852">
    <property type="entry name" value="PRK03137.1"/>
    <property type="match status" value="1"/>
</dbReference>
<dbReference type="PANTHER" id="PTHR42862">
    <property type="entry name" value="DELTA-1-PYRROLINE-5-CARBOXYLATE DEHYDROGENASE 1, ISOFORM A-RELATED"/>
    <property type="match status" value="1"/>
</dbReference>
<dbReference type="PANTHER" id="PTHR42862:SF1">
    <property type="entry name" value="DELTA-1-PYRROLINE-5-CARBOXYLATE DEHYDROGENASE 2, ISOFORM A-RELATED"/>
    <property type="match status" value="1"/>
</dbReference>
<dbReference type="Pfam" id="PF00171">
    <property type="entry name" value="Aldedh"/>
    <property type="match status" value="1"/>
</dbReference>
<dbReference type="SUPFAM" id="SSF53720">
    <property type="entry name" value="ALDH-like"/>
    <property type="match status" value="1"/>
</dbReference>
<dbReference type="PROSITE" id="PS00070">
    <property type="entry name" value="ALDEHYDE_DEHYDR_CYS"/>
    <property type="match status" value="1"/>
</dbReference>
<dbReference type="PROSITE" id="PS00687">
    <property type="entry name" value="ALDEHYDE_DEHYDR_GLU"/>
    <property type="match status" value="1"/>
</dbReference>